<proteinExistence type="evidence at transcript level"/>
<accession>Q6IMT0</accession>
<accession>Q9LTA4</accession>
<accession>Q9LTA5</accession>
<name>KIP_ARATH</name>
<comment type="function">
    <text evidence="1 5">May be involved in membrane trafficking (By similarity). Required for tip growth in pollen tubes and root hairs.</text>
</comment>
<comment type="subcellular location">
    <subcellularLocation>
        <location evidence="8">Secreted</location>
    </subcellularLocation>
    <subcellularLocation>
        <location evidence="1">Golgi apparatus</location>
    </subcellularLocation>
</comment>
<comment type="tissue specificity">
    <text evidence="5">Mostly expressed in pollen and roots, especially in tip-growing cells, but also present in seedlings, stems, leaves, buds, flowers, siliques and seeds.</text>
</comment>
<comment type="disruption phenotype">
    <text evidence="5">Kinky-shaped pollen tubes due to periodic growth arrests alternated with phases of tube axis reorientation of pollen tube tip, as well as shorter and thicker root hairs. Lack of callose plugs in pollen tubes. Reduced seed set.</text>
</comment>
<comment type="similarity">
    <text evidence="7">Belongs to the SABRE family.</text>
</comment>
<comment type="sequence caution" evidence="7">
    <conflict type="erroneous gene model prediction">
        <sequence resource="EMBL-CDS" id="BAA98155"/>
    </conflict>
</comment>
<comment type="sequence caution" evidence="7">
    <conflict type="erroneous gene model prediction">
        <sequence resource="EMBL-CDS" id="BAA98156"/>
    </conflict>
</comment>
<protein>
    <recommendedName>
        <fullName evidence="6">Protein KINKY POLLEN</fullName>
    </recommendedName>
</protein>
<gene>
    <name evidence="6" type="primary">KIP</name>
    <name evidence="9" type="ordered locus">At5g49680</name>
    <name evidence="10" type="ORF">K2I5.3</name>
    <name evidence="11" type="ORF">K2I5.4</name>
</gene>
<feature type="signal peptide" evidence="2">
    <location>
        <begin position="1"/>
        <end position="27"/>
    </location>
</feature>
<feature type="chain" id="PRO_0000432481" description="Protein KINKY POLLEN" evidence="2">
    <location>
        <begin position="28"/>
        <end position="2587"/>
    </location>
</feature>
<feature type="region of interest" description="Disordered" evidence="4">
    <location>
        <begin position="103"/>
        <end position="124"/>
    </location>
</feature>
<feature type="region of interest" description="Disordered" evidence="4">
    <location>
        <begin position="270"/>
        <end position="290"/>
    </location>
</feature>
<feature type="region of interest" description="Disordered" evidence="4">
    <location>
        <begin position="589"/>
        <end position="611"/>
    </location>
</feature>
<feature type="region of interest" description="Disordered" evidence="4">
    <location>
        <begin position="784"/>
        <end position="814"/>
    </location>
</feature>
<feature type="region of interest" description="Disordered" evidence="4">
    <location>
        <begin position="1571"/>
        <end position="1608"/>
    </location>
</feature>
<feature type="region of interest" description="Disordered" evidence="4">
    <location>
        <begin position="1646"/>
        <end position="1673"/>
    </location>
</feature>
<feature type="region of interest" description="Disordered" evidence="4">
    <location>
        <begin position="1729"/>
        <end position="1797"/>
    </location>
</feature>
<feature type="region of interest" description="Disordered" evidence="4">
    <location>
        <begin position="2274"/>
        <end position="2299"/>
    </location>
</feature>
<feature type="region of interest" description="Disordered" evidence="4">
    <location>
        <begin position="2319"/>
        <end position="2360"/>
    </location>
</feature>
<feature type="region of interest" description="Disordered" evidence="4">
    <location>
        <begin position="2442"/>
        <end position="2469"/>
    </location>
</feature>
<feature type="region of interest" description="Disordered" evidence="4">
    <location>
        <begin position="2533"/>
        <end position="2587"/>
    </location>
</feature>
<feature type="coiled-coil region" evidence="2">
    <location>
        <begin position="691"/>
        <end position="716"/>
    </location>
</feature>
<feature type="coiled-coil region" evidence="2">
    <location>
        <begin position="2006"/>
        <end position="2036"/>
    </location>
</feature>
<feature type="compositionally biased region" description="Basic residues" evidence="4">
    <location>
        <begin position="108"/>
        <end position="117"/>
    </location>
</feature>
<feature type="compositionally biased region" description="Polar residues" evidence="4">
    <location>
        <begin position="276"/>
        <end position="285"/>
    </location>
</feature>
<feature type="compositionally biased region" description="Polar residues" evidence="4">
    <location>
        <begin position="1576"/>
        <end position="1590"/>
    </location>
</feature>
<feature type="compositionally biased region" description="Basic and acidic residues" evidence="4">
    <location>
        <begin position="1646"/>
        <end position="1666"/>
    </location>
</feature>
<feature type="compositionally biased region" description="Polar residues" evidence="4">
    <location>
        <begin position="1746"/>
        <end position="1760"/>
    </location>
</feature>
<feature type="compositionally biased region" description="Polar residues" evidence="4">
    <location>
        <begin position="2274"/>
        <end position="2287"/>
    </location>
</feature>
<feature type="compositionally biased region" description="Basic and acidic residues" evidence="4">
    <location>
        <begin position="2289"/>
        <end position="2299"/>
    </location>
</feature>
<feature type="compositionally biased region" description="Basic and acidic residues" evidence="4">
    <location>
        <begin position="2322"/>
        <end position="2336"/>
    </location>
</feature>
<feature type="compositionally biased region" description="Basic and acidic residues" evidence="4">
    <location>
        <begin position="2343"/>
        <end position="2359"/>
    </location>
</feature>
<feature type="compositionally biased region" description="Basic and acidic residues" evidence="4">
    <location>
        <begin position="2442"/>
        <end position="2458"/>
    </location>
</feature>
<feature type="compositionally biased region" description="Polar residues" evidence="4">
    <location>
        <begin position="2540"/>
        <end position="2557"/>
    </location>
</feature>
<feature type="compositionally biased region" description="Low complexity" evidence="4">
    <location>
        <begin position="2569"/>
        <end position="2579"/>
    </location>
</feature>
<feature type="glycosylation site" description="N-linked (GlcNAc...) asparagine" evidence="3">
    <location>
        <position position="71"/>
    </location>
</feature>
<feature type="glycosylation site" description="N-linked (GlcNAc...) asparagine" evidence="3">
    <location>
        <position position="262"/>
    </location>
</feature>
<feature type="glycosylation site" description="N-linked (GlcNAc...) asparagine" evidence="3">
    <location>
        <position position="281"/>
    </location>
</feature>
<feature type="glycosylation site" description="N-linked (GlcNAc...) asparagine" evidence="3">
    <location>
        <position position="485"/>
    </location>
</feature>
<feature type="glycosylation site" description="N-linked (GlcNAc...) asparagine" evidence="3">
    <location>
        <position position="1155"/>
    </location>
</feature>
<feature type="glycosylation site" description="N-linked (GlcNAc...) asparagine" evidence="3">
    <location>
        <position position="1250"/>
    </location>
</feature>
<feature type="glycosylation site" description="N-linked (GlcNAc...) asparagine" evidence="3">
    <location>
        <position position="1281"/>
    </location>
</feature>
<feature type="glycosylation site" description="N-linked (GlcNAc...) asparagine" evidence="3">
    <location>
        <position position="1486"/>
    </location>
</feature>
<feature type="glycosylation site" description="N-linked (GlcNAc...) asparagine" evidence="3">
    <location>
        <position position="1595"/>
    </location>
</feature>
<feature type="glycosylation site" description="N-linked (GlcNAc...) asparagine" evidence="3">
    <location>
        <position position="1861"/>
    </location>
</feature>
<feature type="glycosylation site" description="N-linked (GlcNAc...) asparagine" evidence="3">
    <location>
        <position position="1951"/>
    </location>
</feature>
<feature type="glycosylation site" description="N-linked (GlcNAc...) asparagine" evidence="3">
    <location>
        <position position="1981"/>
    </location>
</feature>
<feature type="glycosylation site" description="N-linked (GlcNAc...) asparagine" evidence="3">
    <location>
        <position position="2036"/>
    </location>
</feature>
<feature type="glycosylation site" description="N-linked (GlcNAc...) asparagine" evidence="3">
    <location>
        <position position="2278"/>
    </location>
</feature>
<feature type="glycosylation site" description="N-linked (GlcNAc...) asparagine" evidence="3">
    <location>
        <position position="2513"/>
    </location>
</feature>
<feature type="glycosylation site" description="N-linked (GlcNAc...) asparagine" evidence="3">
    <location>
        <position position="2544"/>
    </location>
</feature>
<evidence type="ECO:0000250" key="1">
    <source>
        <dbReference type="UniProtKB" id="K7VLR4"/>
    </source>
</evidence>
<evidence type="ECO:0000255" key="2"/>
<evidence type="ECO:0000255" key="3">
    <source>
        <dbReference type="PROSITE-ProRule" id="PRU00498"/>
    </source>
</evidence>
<evidence type="ECO:0000256" key="4">
    <source>
        <dbReference type="SAM" id="MobiDB-lite"/>
    </source>
</evidence>
<evidence type="ECO:0000269" key="5">
    <source>
    </source>
</evidence>
<evidence type="ECO:0000303" key="6">
    <source>
    </source>
</evidence>
<evidence type="ECO:0000305" key="7"/>
<evidence type="ECO:0000305" key="8">
    <source>
    </source>
</evidence>
<evidence type="ECO:0000312" key="9">
    <source>
        <dbReference type="Araport" id="AT5G49680"/>
    </source>
</evidence>
<evidence type="ECO:0000312" key="10">
    <source>
        <dbReference type="EMBL" id="BAA98155.1"/>
    </source>
</evidence>
<evidence type="ECO:0000312" key="11">
    <source>
        <dbReference type="EMBL" id="BAA98156.1"/>
    </source>
</evidence>
<evidence type="ECO:0000312" key="12">
    <source>
        <dbReference type="EMBL" id="DAA00366.1"/>
    </source>
</evidence>
<organism evidence="12">
    <name type="scientific">Arabidopsis thaliana</name>
    <name type="common">Mouse-ear cress</name>
    <dbReference type="NCBI Taxonomy" id="3702"/>
    <lineage>
        <taxon>Eukaryota</taxon>
        <taxon>Viridiplantae</taxon>
        <taxon>Streptophyta</taxon>
        <taxon>Embryophyta</taxon>
        <taxon>Tracheophyta</taxon>
        <taxon>Spermatophyta</taxon>
        <taxon>Magnoliopsida</taxon>
        <taxon>eudicotyledons</taxon>
        <taxon>Gunneridae</taxon>
        <taxon>Pentapetalae</taxon>
        <taxon>rosids</taxon>
        <taxon>malvids</taxon>
        <taxon>Brassicales</taxon>
        <taxon>Brassicaceae</taxon>
        <taxon>Camelineae</taxon>
        <taxon>Arabidopsis</taxon>
    </lineage>
</organism>
<dbReference type="EMBL" id="BK000518">
    <property type="protein sequence ID" value="DAA00366.1"/>
    <property type="molecule type" value="mRNA"/>
</dbReference>
<dbReference type="EMBL" id="AB025613">
    <property type="protein sequence ID" value="BAA98155.1"/>
    <property type="status" value="ALT_SEQ"/>
    <property type="molecule type" value="Genomic_DNA"/>
</dbReference>
<dbReference type="EMBL" id="AB025613">
    <property type="protein sequence ID" value="BAA98156.1"/>
    <property type="status" value="ALT_SEQ"/>
    <property type="molecule type" value="Genomic_DNA"/>
</dbReference>
<dbReference type="EMBL" id="CP002688">
    <property type="protein sequence ID" value="AED95844.1"/>
    <property type="molecule type" value="Genomic_DNA"/>
</dbReference>
<dbReference type="RefSeq" id="NP_001078738.1">
    <property type="nucleotide sequence ID" value="NM_001085269.2"/>
</dbReference>
<dbReference type="SMR" id="Q6IMT0"/>
<dbReference type="FunCoup" id="Q6IMT0">
    <property type="interactions" value="2656"/>
</dbReference>
<dbReference type="STRING" id="3702.Q6IMT0"/>
<dbReference type="GlyCosmos" id="Q6IMT0">
    <property type="glycosylation" value="16 sites, No reported glycans"/>
</dbReference>
<dbReference type="GlyGen" id="Q6IMT0">
    <property type="glycosylation" value="17 sites"/>
</dbReference>
<dbReference type="iPTMnet" id="Q6IMT0"/>
<dbReference type="PaxDb" id="3702-AT5G49680.2"/>
<dbReference type="ProteomicsDB" id="237089"/>
<dbReference type="EnsemblPlants" id="AT5G49680.2">
    <property type="protein sequence ID" value="AT5G49680.2"/>
    <property type="gene ID" value="AT5G49680"/>
</dbReference>
<dbReference type="GeneID" id="835031"/>
<dbReference type="Gramene" id="AT5G49680.2">
    <property type="protein sequence ID" value="AT5G49680.2"/>
    <property type="gene ID" value="AT5G49680"/>
</dbReference>
<dbReference type="KEGG" id="ath:AT5G49680"/>
<dbReference type="Araport" id="AT5G49680"/>
<dbReference type="TAIR" id="AT5G49680"/>
<dbReference type="eggNOG" id="KOG1910">
    <property type="taxonomic scope" value="Eukaryota"/>
</dbReference>
<dbReference type="HOGENOM" id="CLU_000876_0_0_1"/>
<dbReference type="InParanoid" id="Q6IMT0"/>
<dbReference type="OMA" id="CALINVT"/>
<dbReference type="PhylomeDB" id="Q6IMT0"/>
<dbReference type="PRO" id="PR:Q6IMT0"/>
<dbReference type="Proteomes" id="UP000006548">
    <property type="component" value="Chromosome 5"/>
</dbReference>
<dbReference type="ExpressionAtlas" id="Q6IMT0">
    <property type="expression patterns" value="baseline and differential"/>
</dbReference>
<dbReference type="GO" id="GO:0005576">
    <property type="term" value="C:extracellular region"/>
    <property type="evidence" value="ECO:0007669"/>
    <property type="project" value="UniProtKB-SubCell"/>
</dbReference>
<dbReference type="GO" id="GO:0005794">
    <property type="term" value="C:Golgi apparatus"/>
    <property type="evidence" value="ECO:0007669"/>
    <property type="project" value="UniProtKB-SubCell"/>
</dbReference>
<dbReference type="GO" id="GO:0090404">
    <property type="term" value="C:pollen tube tip"/>
    <property type="evidence" value="ECO:0000314"/>
    <property type="project" value="UniProtKB"/>
</dbReference>
<dbReference type="GO" id="GO:0035619">
    <property type="term" value="C:root hair tip"/>
    <property type="evidence" value="ECO:0000314"/>
    <property type="project" value="UniProtKB"/>
</dbReference>
<dbReference type="GO" id="GO:0009860">
    <property type="term" value="P:pollen tube growth"/>
    <property type="evidence" value="ECO:0000315"/>
    <property type="project" value="UniProtKB"/>
</dbReference>
<dbReference type="GO" id="GO:0048768">
    <property type="term" value="P:root hair cell tip growth"/>
    <property type="evidence" value="ECO:0000315"/>
    <property type="project" value="UniProtKB"/>
</dbReference>
<dbReference type="InterPro" id="IPR019441">
    <property type="entry name" value="FMP27/BLTP2/Hobbit_GFWDK_RBG"/>
</dbReference>
<dbReference type="InterPro" id="IPR045167">
    <property type="entry name" value="Hobbit"/>
</dbReference>
<dbReference type="PANTHER" id="PTHR15678">
    <property type="entry name" value="ANTIGEN MLAA-22-RELATED"/>
    <property type="match status" value="1"/>
</dbReference>
<dbReference type="PANTHER" id="PTHR15678:SF8">
    <property type="entry name" value="PROTEIN KINKY POLLEN"/>
    <property type="match status" value="1"/>
</dbReference>
<dbReference type="Pfam" id="PF10344">
    <property type="entry name" value="Hobbit"/>
    <property type="match status" value="1"/>
</dbReference>
<dbReference type="SMART" id="SM01214">
    <property type="entry name" value="Fmp27_GFWDK"/>
    <property type="match status" value="1"/>
</dbReference>
<reference key="1">
    <citation type="journal article" date="2003" name="Plant J.">
        <title>KINKY POLLEN encodes a SABRE-like protein required for tip growth in Arabidopsis and conserved among eukaryotes.</title>
        <authorList>
            <person name="Procissi A."/>
            <person name="Guyon A."/>
            <person name="Pierson E.S."/>
            <person name="Giritch A."/>
            <person name="Knuiman B."/>
            <person name="Grandjean O."/>
            <person name="Tonelli C."/>
            <person name="Derksen J."/>
            <person name="Pelletier G."/>
            <person name="Bonhomme S."/>
        </authorList>
    </citation>
    <scope>NUCLEOTIDE SEQUENCE [MRNA]</scope>
    <scope>FUNCTION</scope>
    <scope>DISRUPTION PHENOTYPE</scope>
    <scope>TISSUE SPECIFICITY</scope>
</reference>
<reference key="2">
    <citation type="submission" date="1999-04" db="EMBL/GenBank/DDBJ databases">
        <title>Structural analysis of Arabidopsis thaliana chromosome 5. XI.</title>
        <authorList>
            <person name="Kaneko T."/>
            <person name="Katoh T."/>
            <person name="Asamizu E."/>
            <person name="Sato S."/>
            <person name="Nakamura Y."/>
            <person name="Kotani H."/>
            <person name="Tabata S."/>
        </authorList>
    </citation>
    <scope>NUCLEOTIDE SEQUENCE [LARGE SCALE GENOMIC DNA]</scope>
    <source>
        <strain>cv. Columbia</strain>
    </source>
</reference>
<reference key="3">
    <citation type="journal article" date="2017" name="Plant J.">
        <title>Araport11: a complete reannotation of the Arabidopsis thaliana reference genome.</title>
        <authorList>
            <person name="Cheng C.Y."/>
            <person name="Krishnakumar V."/>
            <person name="Chan A.P."/>
            <person name="Thibaud-Nissen F."/>
            <person name="Schobel S."/>
            <person name="Town C.D."/>
        </authorList>
    </citation>
    <scope>GENOME REANNOTATION</scope>
    <source>
        <strain>cv. Columbia</strain>
    </source>
</reference>
<sequence>MAAFLVMFIFTIALFVALLWVFFKSLPWILRHSAGITLSFQFDGWNCLKDVALQFKKGSIESIVIGEFKANLSQSLVELCATAFIQDPKVIFSICDLKIVTRPSHSSKGPRKPKTRKSSSGGKGKLMLFANIGRFFSVSMTNMVVQTPKATAEIKELELDLSKDRGSGNFFMKLYLLPIFVQIGEPHVTSTHSPEMDSDICLARQTPSKTAEGSSSSSFHCEKISLSCEFGPNRKSSPSIKNVEVDLANAVLNLNEKLLLKNKSSTSAASKGEVIDSSSGNTTSEKPPKQPMNVLVAKHASKFPEKVLFDLTKLEIRFVHQEHDFSIANSIKGFQLRSAKSQSGEDGKEDTCLDFAMELQEMHLFRESEVSVLEMTKFGVFTKVYCPIQESLPVRAEVEIKLGGIMSNIIMTRFEPLLRLHFSRKKKMVLKEERPTIAKSETTGFKAVVWKCATSAPDVTVVLYNPGGSPIYQCGLDSFQATANNMSNRGTVVQMELNELTLCMVDEHKGCLKESLFGLESDPGSLINIRKVRSEWGKKEVLPEGDGSKGKQTLVVDVSEIGLLFSFRSVEALTVNAISSQAYIKSLTGSSSKNKQEKGAHRSKPPSGRGTQLLKLNVERFSLNFAGDSSLENTVIDDPKRVNYGSQGGRIIISVSADGSPRTASVFSTLSEEHEKLKYIISFEILKFGFTLNKEIQSTQVELETAKAIYQEFLEEPHQVSRVTLCDIQNAKFVRRIGGGKEVSICSLFSASNIAVRWEPDVHISMVELGLRLKSLVLTQKLKQHGNRNPEEASTVTGDKQKEEPTTTPNSLDKKKKKESIFAVDVEMLSITAEAGDGVEAEVQIQSIFSENVGIGVLLEGFMLGFCGCRIVKSSRVQISRIPSMPSTSSSVTPATGGTPWDWIVQGVDIHICMPFRLQLRAIDDAVEEMLRALKLVTNAKTKLIFPIKKESSTPKKPGSKKVGRIRFGIRKLIFDIEEEPLQGWLDEHYHLMRKEAYELAIRSKFLDELMSSGNQVPKTGGDESDGEKKISFEGEEIDPQDPAIIQMMNEKLYKQSFSSYYKSCQSLRLSDGSGACKEGFQAGFKMSTSRTSLLSVSVTDLDLSLTAIGGGEAGMIEIVKKLDPVAEEKDIPFSRLYGSNLRLNTGTLAVQIRNYTFPLLSTAFGKCEGCLVLAQQATAFQPQIIHDVYIGRWRKVQMLRSASGTTPAMKTYLDLPIKFQKGEISFGIGYEPVLADISYAFTVALRRANLSLKGPGLLQPPKKEKSLPWWDEMRNYVHGNVTLSFSETKWIVLGSPDPYEKLDKLHMTSGSVEIQQYDGRVHFSAEDIKIFFSSFEGLARHYPNSPVCPSSYPFLEVPRFSLEVRMDWECESGSPLNHYLFALPIEGKARDKIYDPFRSTSLSLRWDFTLRPENPSVSAVDQTKKVGSECKPEKSSFSPPTINIGAHDLAWLIRFWNMNYLPPYKLRTFSRWPRFGVPRIPRSGNLSLDRVMTEYNLRLDVTPICIKHMTLDSNNPAKGLTFDMTKLKYEICFSRGNQDFTFECKRETLDPVYQGIDLHLPKAFLRRDQHCSKPAQMSRTSSLSGSTDRVTSDNGTSTSDGTEKHPDDGFLFSSDYFTIRRQAPKADPERLMVWKEEGKIYREKVDARSTKEKQSEPEENSHSDPSDDDGYNVVIADNCQRIFVYGLKLLWNIENRDAVLSFAGGMSKAFQPPKPSPSRQYAQRKLLEGNQKHSESEVSQDEPTKQPSTGSGNLASQSKEPAEVLSPSSEPIKTENFASFPLGATKTGDSNDPEEEGTRHFMVNVVEPQFNLHSEDINGRFLLAAASGRVLARSFHSVVHVAYDMIEKAAQNENDHNPENGTDMTWTRMEVSMMLEHVQAHVAPTDVDPGAGVQWLPKIRRSSPKAKRTGALLERVFMPCDMYFQYTRHKGVTPDLKVKPLKELTFNSRNITASMTSRQFQVMTDVLSNLLFARLPKAHNDSLKLSGEEDDEVEEEIDEVVPDGIEEVELAKIELEAKERDRMMLLDDIRKLTQNESNSGNINLEKESDFWMISGGRPVLVERLRKAYLSVQQSRKTAYTALRTSVKNAAELRLLEKDKNKRPSSAMRISLQINKVIWSMVLDGKTFAEVEIDNMIYDFNRDYRDIGIAQFTTRYVVLRNCLPNAKCDTVLSAWNPPPEWGKKVMLQVDARQGAPKDGQAPYELFQVEIYPLKIHLTETMYTMMWEYIFPGEEQHSQRREEVWKVSTTSGSRRRKGSFAQEAAALLAASDLGQGSKNQSLKSSTIRGSGRELRRTSSFDRSWEETVAESVATELVLSSMEHQGESSKGKLKDSKTSKAGGRSVHEEKKGEKSLEDKKSRPQKIMQFQTIKISQVELLITYEGSRFVVNDMKLCMDTFHRVEFSGTWRRLFSRVKKHIIWGVLKSVTGMQMKKFKDKAHVPKDDIGLRDKDESGRTDQESGAWVKRPGDNAGDGFVTSIRGIFNTQRRKAKKFVLRTMRGEAEDNFPGEWSDNESDFSPFARQLTITKAKKLIRRHSKKFQNQNTTKGSKKTQLSPTLSPPKEEDQYESDSSSGSSAYEEFLDQNQI</sequence>
<keyword id="KW-0175">Coiled coil</keyword>
<keyword id="KW-0217">Developmental protein</keyword>
<keyword id="KW-0325">Glycoprotein</keyword>
<keyword id="KW-0333">Golgi apparatus</keyword>
<keyword id="KW-1185">Reference proteome</keyword>
<keyword id="KW-0964">Secreted</keyword>
<keyword id="KW-0732">Signal</keyword>